<reference key="1">
    <citation type="journal article" date="2000" name="J. Virol.">
        <title>The genome of fowlpox virus.</title>
        <authorList>
            <person name="Afonso C.L."/>
            <person name="Tulman E.R."/>
            <person name="Lu Z."/>
            <person name="Zsak L."/>
            <person name="Kutish G.F."/>
            <person name="Rock D.L."/>
        </authorList>
    </citation>
    <scope>NUCLEOTIDE SEQUENCE [LARGE SCALE GENOMIC DNA]</scope>
</reference>
<evidence type="ECO:0000305" key="1"/>
<sequence>MFDITNLIELYESNDYVSGDYKHSQLQKAFLKLPITEVVMLVKSGFYPSKLSKKFYKPIAKFCVDKIYLFKPEYVSLKDLFTVIYTFDDLSKYKEIIRYYYYELSVSNSYQVYKKCKNILGYKDEYDNDIIEELSENDLVEKMVNFPGFRKIVYKKKILSIRILKEMYYKHKVLPINKGITPIREEDICFFIDALYDAHDDDDVLYLLLEINEQILDSDEVKETIIRKICKGENIDVLRYYVSHYLIDHAKLGVYYNIFFSERDIISEYGLTDESLKVICKYIDRYSSSIPSIIKLLLDNSNYTLLASVIDYIPEERLNENLYMQIVRHSNDNKPKIKSFKAEFLSECLMVMCYLRGYEDIVDFLIALDVETIVRNRINPFNDYTFTTDWFNKNTELVRLYISFYFIDPVMMRKLLFEYPLCETSTTVAIEELKKYRSSINNNYNIDYHEEFKIVDLPRSFNIPISEVVSTKEYNSIISFISDKSYKFKITSQLLKYNILQTIKVENLCYSHINNLHSFYFNITKPSGIIDNISRLIYQIGDLGRLLRHGFLSFTDNYFGKWIPSLNYSKILDHYQYNGPDYVLSWQIGKLDLKAFVKYKDFPKFFLTKYNIDFLLEKEVLLYYCIYSYLLLYILVGSVTYVEQENIYYFITNIINSFIQGLGIRNSIDSLSEEVVKELIIIQKLPENKRKLSSIRPVSLLNLCKRVCAFISRDGKK</sequence>
<comment type="similarity">
    <text evidence="1">Belongs to the poxviridae E2 protein family.</text>
</comment>
<name>E2_FOWPN</name>
<dbReference type="EMBL" id="AF198100">
    <property type="protein sequence ID" value="AAF44445.1"/>
    <property type="molecule type" value="Genomic_DNA"/>
</dbReference>
<dbReference type="RefSeq" id="NP_039064.1">
    <property type="nucleotide sequence ID" value="NC_002188.1"/>
</dbReference>
<dbReference type="SMR" id="Q9J5B9"/>
<dbReference type="GeneID" id="1486649"/>
<dbReference type="KEGG" id="vg:1486649"/>
<dbReference type="Proteomes" id="UP000008597">
    <property type="component" value="Segment"/>
</dbReference>
<dbReference type="InterPro" id="IPR007585">
    <property type="entry name" value="Poxvirus_E2"/>
</dbReference>
<dbReference type="InterPro" id="IPR021155">
    <property type="entry name" value="Poxvirus_E2/O1"/>
</dbReference>
<dbReference type="Pfam" id="PF04497">
    <property type="entry name" value="Pox_E2-like"/>
    <property type="match status" value="1"/>
</dbReference>
<dbReference type="PIRSF" id="PIRSF015692">
    <property type="entry name" value="VAC_E2L"/>
    <property type="match status" value="1"/>
</dbReference>
<organism>
    <name type="scientific">Fowlpox virus (strain NVSL)</name>
    <name type="common">FPV</name>
    <dbReference type="NCBI Taxonomy" id="928301"/>
    <lineage>
        <taxon>Viruses</taxon>
        <taxon>Varidnaviria</taxon>
        <taxon>Bamfordvirae</taxon>
        <taxon>Nucleocytoviricota</taxon>
        <taxon>Pokkesviricetes</taxon>
        <taxon>Chitovirales</taxon>
        <taxon>Poxviridae</taxon>
        <taxon>Chordopoxvirinae</taxon>
        <taxon>Avipoxvirus</taxon>
        <taxon>Fowlpox virus</taxon>
    </lineage>
</organism>
<protein>
    <recommendedName>
        <fullName>Protein E2 homolog</fullName>
    </recommendedName>
</protein>
<organismHost>
    <name type="scientific">Vertebrata</name>
    <dbReference type="NCBI Taxonomy" id="7742"/>
</organismHost>
<accession>Q9J5B9</accession>
<keyword id="KW-1185">Reference proteome</keyword>
<proteinExistence type="inferred from homology"/>
<gene>
    <name type="ordered locus">FPV101</name>
</gene>
<feature type="chain" id="PRO_0000099446" description="Protein E2 homolog">
    <location>
        <begin position="1"/>
        <end position="717"/>
    </location>
</feature>